<protein>
    <recommendedName>
        <fullName evidence="1">Pescadillo homolog</fullName>
    </recommendedName>
    <alternativeName>
        <fullName evidence="1">Nucleolar protein 7 homolog</fullName>
    </alternativeName>
</protein>
<accession>A5DYS6</accession>
<organism>
    <name type="scientific">Lodderomyces elongisporus (strain ATCC 11503 / CBS 2605 / JCM 1781 / NBRC 1676 / NRRL YB-4239)</name>
    <name type="common">Yeast</name>
    <name type="synonym">Saccharomyces elongisporus</name>
    <dbReference type="NCBI Taxonomy" id="379508"/>
    <lineage>
        <taxon>Eukaryota</taxon>
        <taxon>Fungi</taxon>
        <taxon>Dikarya</taxon>
        <taxon>Ascomycota</taxon>
        <taxon>Saccharomycotina</taxon>
        <taxon>Pichiomycetes</taxon>
        <taxon>Debaryomycetaceae</taxon>
        <taxon>Candida/Lodderomyces clade</taxon>
        <taxon>Lodderomyces</taxon>
    </lineage>
</organism>
<reference key="1">
    <citation type="journal article" date="2009" name="Nature">
        <title>Evolution of pathogenicity and sexual reproduction in eight Candida genomes.</title>
        <authorList>
            <person name="Butler G."/>
            <person name="Rasmussen M.D."/>
            <person name="Lin M.F."/>
            <person name="Santos M.A.S."/>
            <person name="Sakthikumar S."/>
            <person name="Munro C.A."/>
            <person name="Rheinbay E."/>
            <person name="Grabherr M."/>
            <person name="Forche A."/>
            <person name="Reedy J.L."/>
            <person name="Agrafioti I."/>
            <person name="Arnaud M.B."/>
            <person name="Bates S."/>
            <person name="Brown A.J.P."/>
            <person name="Brunke S."/>
            <person name="Costanzo M.C."/>
            <person name="Fitzpatrick D.A."/>
            <person name="de Groot P.W.J."/>
            <person name="Harris D."/>
            <person name="Hoyer L.L."/>
            <person name="Hube B."/>
            <person name="Klis F.M."/>
            <person name="Kodira C."/>
            <person name="Lennard N."/>
            <person name="Logue M.E."/>
            <person name="Martin R."/>
            <person name="Neiman A.M."/>
            <person name="Nikolaou E."/>
            <person name="Quail M.A."/>
            <person name="Quinn J."/>
            <person name="Santos M.C."/>
            <person name="Schmitzberger F.F."/>
            <person name="Sherlock G."/>
            <person name="Shah P."/>
            <person name="Silverstein K.A.T."/>
            <person name="Skrzypek M.S."/>
            <person name="Soll D."/>
            <person name="Staggs R."/>
            <person name="Stansfield I."/>
            <person name="Stumpf M.P.H."/>
            <person name="Sudbery P.E."/>
            <person name="Srikantha T."/>
            <person name="Zeng Q."/>
            <person name="Berman J."/>
            <person name="Berriman M."/>
            <person name="Heitman J."/>
            <person name="Gow N.A.R."/>
            <person name="Lorenz M.C."/>
            <person name="Birren B.W."/>
            <person name="Kellis M."/>
            <person name="Cuomo C.A."/>
        </authorList>
    </citation>
    <scope>NUCLEOTIDE SEQUENCE [LARGE SCALE GENOMIC DNA]</scope>
    <source>
        <strain>ATCC 11503 / BCRC 21390 / CBS 2605 / JCM 1781 / NBRC 1676 / NRRL YB-4239</strain>
    </source>
</reference>
<keyword id="KW-0175">Coiled coil</keyword>
<keyword id="KW-0539">Nucleus</keyword>
<keyword id="KW-1185">Reference proteome</keyword>
<keyword id="KW-0690">Ribosome biogenesis</keyword>
<keyword id="KW-0698">rRNA processing</keyword>
<feature type="chain" id="PRO_0000370494" description="Pescadillo homolog">
    <location>
        <begin position="1"/>
        <end position="619"/>
    </location>
</feature>
<feature type="domain" description="BRCT" evidence="1">
    <location>
        <begin position="353"/>
        <end position="452"/>
    </location>
</feature>
<feature type="region of interest" description="Disordered" evidence="2">
    <location>
        <begin position="303"/>
        <end position="324"/>
    </location>
</feature>
<feature type="region of interest" description="Disordered" evidence="2">
    <location>
        <begin position="456"/>
        <end position="567"/>
    </location>
</feature>
<feature type="coiled-coil region" evidence="1">
    <location>
        <begin position="472"/>
        <end position="560"/>
    </location>
</feature>
<feature type="coiled-coil region" evidence="1">
    <location>
        <begin position="588"/>
        <end position="619"/>
    </location>
</feature>
<feature type="compositionally biased region" description="Acidic residues" evidence="2">
    <location>
        <begin position="312"/>
        <end position="324"/>
    </location>
</feature>
<feature type="compositionally biased region" description="Acidic residues" evidence="2">
    <location>
        <begin position="480"/>
        <end position="522"/>
    </location>
</feature>
<feature type="compositionally biased region" description="Basic and acidic residues" evidence="2">
    <location>
        <begin position="523"/>
        <end position="539"/>
    </location>
</feature>
<proteinExistence type="inferred from homology"/>
<gene>
    <name evidence="1" type="primary">NOP7</name>
    <name type="ORF">LELG_02513</name>
</gene>
<evidence type="ECO:0000255" key="1">
    <source>
        <dbReference type="HAMAP-Rule" id="MF_03028"/>
    </source>
</evidence>
<evidence type="ECO:0000256" key="2">
    <source>
        <dbReference type="SAM" id="MobiDB-lite"/>
    </source>
</evidence>
<sequence>MGKIKKRATSGNAKNFITRTQAIKKLQVSLADFRRLCIFKGIYPREPRNKKKANKGSTAPVTFYYAKDIHYLLHEPVLDKFRQHKTFAKKLQRALGKGEISSAAKLDANRPKYTLNHIIKERYPTFLDALRDLDDPLNMLFLFSNMPAIDKVSTKIIADAEKLCNYWLAYVSKERLLKKMFVSIKGVYYQATIKGQEVRWLIPYKFPTNIPTDVDFRIMLTFLEFYSTLLNFVLYKLYNESGLIYPPHIDIAKLKAAGGLSSYVLQSKDGKNVAILQKKQDDAGSNVEGKELSSAELKKAIKADKDQKDQDTIEDAEEVTEPTVEETELDEFQNGTTNNAVDTLVQPSQFSSPTSQLFSKFIFFIGREVPLDILEFVILSCGGKVISEISLDDLKLNDPKLYASLDLNSITHQISDRKKILQKVPGRTYIQPQWVFDSINKGELVSVGDYAPGETLPPHLSPWGDAGGYDPNAKAQVTAEAEEEEEEEEEDEEEEEEEEEIEVADGDEDQDDEEEEEIEDEDLKAQKELEMEVAGKKFSELQNAEEGSKQKKQKKNASTKAALTPEEEAKELAKIMMTNKQKKLYKKMQYGIEKKTNRVDELTKKRKQLEKKKKQLKDV</sequence>
<name>PESC_LODEL</name>
<dbReference type="EMBL" id="CH981526">
    <property type="protein sequence ID" value="EDK44334.1"/>
    <property type="molecule type" value="Genomic_DNA"/>
</dbReference>
<dbReference type="RefSeq" id="XP_001525955.1">
    <property type="nucleotide sequence ID" value="XM_001525905.1"/>
</dbReference>
<dbReference type="SMR" id="A5DYS6"/>
<dbReference type="FunCoup" id="A5DYS6">
    <property type="interactions" value="1302"/>
</dbReference>
<dbReference type="STRING" id="379508.A5DYS6"/>
<dbReference type="VEuPathDB" id="FungiDB:LELG_02513"/>
<dbReference type="eggNOG" id="KOG2481">
    <property type="taxonomic scope" value="Eukaryota"/>
</dbReference>
<dbReference type="HOGENOM" id="CLU_019619_1_1_1"/>
<dbReference type="InParanoid" id="A5DYS6"/>
<dbReference type="OMA" id="QKVTWIV"/>
<dbReference type="OrthoDB" id="10264910at2759"/>
<dbReference type="Proteomes" id="UP000001996">
    <property type="component" value="Unassembled WGS sequence"/>
</dbReference>
<dbReference type="GO" id="GO:0005654">
    <property type="term" value="C:nucleoplasm"/>
    <property type="evidence" value="ECO:0007669"/>
    <property type="project" value="UniProtKB-SubCell"/>
</dbReference>
<dbReference type="GO" id="GO:0070545">
    <property type="term" value="C:PeBoW complex"/>
    <property type="evidence" value="ECO:0007669"/>
    <property type="project" value="EnsemblFungi"/>
</dbReference>
<dbReference type="GO" id="GO:0030687">
    <property type="term" value="C:preribosome, large subunit precursor"/>
    <property type="evidence" value="ECO:0007669"/>
    <property type="project" value="UniProtKB-UniRule"/>
</dbReference>
<dbReference type="GO" id="GO:0070180">
    <property type="term" value="F:large ribosomal subunit rRNA binding"/>
    <property type="evidence" value="ECO:0007669"/>
    <property type="project" value="EnsemblFungi"/>
</dbReference>
<dbReference type="GO" id="GO:0043021">
    <property type="term" value="F:ribonucleoprotein complex binding"/>
    <property type="evidence" value="ECO:0007669"/>
    <property type="project" value="UniProtKB-UniRule"/>
</dbReference>
<dbReference type="GO" id="GO:0000466">
    <property type="term" value="P:maturation of 5.8S rRNA from tricistronic rRNA transcript (SSU-rRNA, 5.8S rRNA, LSU-rRNA)"/>
    <property type="evidence" value="ECO:0007669"/>
    <property type="project" value="UniProtKB-UniRule"/>
</dbReference>
<dbReference type="GO" id="GO:0000463">
    <property type="term" value="P:maturation of LSU-rRNA from tricistronic rRNA transcript (SSU-rRNA, 5.8S rRNA, LSU-rRNA)"/>
    <property type="evidence" value="ECO:0007669"/>
    <property type="project" value="UniProtKB-UniRule"/>
</dbReference>
<dbReference type="GO" id="GO:0000462">
    <property type="term" value="P:maturation of SSU-rRNA from tricistronic rRNA transcript (SSU-rRNA, 5.8S rRNA, LSU-rRNA)"/>
    <property type="evidence" value="ECO:0007669"/>
    <property type="project" value="EnsemblFungi"/>
</dbReference>
<dbReference type="CDD" id="cd17709">
    <property type="entry name" value="BRCT_pescadillo_like"/>
    <property type="match status" value="1"/>
</dbReference>
<dbReference type="FunFam" id="3.40.50.10190:FF:000067">
    <property type="entry name" value="Pescadillo homolog"/>
    <property type="match status" value="1"/>
</dbReference>
<dbReference type="Gene3D" id="3.40.50.10190">
    <property type="entry name" value="BRCT domain"/>
    <property type="match status" value="1"/>
</dbReference>
<dbReference type="HAMAP" id="MF_03028">
    <property type="entry name" value="Pescadillo"/>
    <property type="match status" value="1"/>
</dbReference>
<dbReference type="InterPro" id="IPR001357">
    <property type="entry name" value="BRCT_dom"/>
</dbReference>
<dbReference type="InterPro" id="IPR036420">
    <property type="entry name" value="BRCT_dom_sf"/>
</dbReference>
<dbReference type="InterPro" id="IPR010613">
    <property type="entry name" value="PES"/>
</dbReference>
<dbReference type="PANTHER" id="PTHR12221">
    <property type="entry name" value="PESCADILLO - RELATED"/>
    <property type="match status" value="1"/>
</dbReference>
<dbReference type="PANTHER" id="PTHR12221:SF6">
    <property type="entry name" value="PESCADILLO HOMOLOG"/>
    <property type="match status" value="1"/>
</dbReference>
<dbReference type="Pfam" id="PF16589">
    <property type="entry name" value="BRCT_2"/>
    <property type="match status" value="1"/>
</dbReference>
<dbReference type="Pfam" id="PF06732">
    <property type="entry name" value="Pescadillo_N"/>
    <property type="match status" value="1"/>
</dbReference>
<dbReference type="SMART" id="SM00292">
    <property type="entry name" value="BRCT"/>
    <property type="match status" value="1"/>
</dbReference>
<dbReference type="SUPFAM" id="SSF52113">
    <property type="entry name" value="BRCT domain"/>
    <property type="match status" value="1"/>
</dbReference>
<dbReference type="PROSITE" id="PS50172">
    <property type="entry name" value="BRCT"/>
    <property type="match status" value="1"/>
</dbReference>
<comment type="function">
    <text evidence="1">Component of the NOP7 complex, which is required for maturation of the 25S and 5.8S ribosomal RNAs and formation of the 60S ribosome.</text>
</comment>
<comment type="subunit">
    <text evidence="1">Component of the NOP7 complex, composed of ERB1, NOP7 and YTM1. The complex is held together by ERB1, which interacts with NOP7 via its N-terminal domain and with YTM1 via a high-affinity interaction between the seven-bladed beta-propeller domains of the 2 proteins. The NOP7 complex associates with the 66S pre-ribosome.</text>
</comment>
<comment type="subcellular location">
    <subcellularLocation>
        <location evidence="1">Nucleus</location>
        <location evidence="1">Nucleolus</location>
    </subcellularLocation>
    <subcellularLocation>
        <location evidence="1">Nucleus</location>
        <location evidence="1">Nucleoplasm</location>
    </subcellularLocation>
</comment>
<comment type="similarity">
    <text evidence="1">Belongs to the pescadillo family.</text>
</comment>